<feature type="chain" id="PRO_0000077035" description="Iron-sulfur assembly protein 2">
    <location>
        <begin position="1"/>
        <end position="185"/>
    </location>
</feature>
<feature type="binding site" evidence="1">
    <location>
        <position position="89"/>
    </location>
    <ligand>
        <name>Fe cation</name>
        <dbReference type="ChEBI" id="CHEBI:24875"/>
    </ligand>
</feature>
<feature type="binding site" evidence="1">
    <location>
        <position position="175"/>
    </location>
    <ligand>
        <name>Fe cation</name>
        <dbReference type="ChEBI" id="CHEBI:24875"/>
    </ligand>
</feature>
<feature type="binding site" evidence="1">
    <location>
        <position position="177"/>
    </location>
    <ligand>
        <name>Fe cation</name>
        <dbReference type="ChEBI" id="CHEBI:24875"/>
    </ligand>
</feature>
<organism>
    <name type="scientific">Saccharomyces cerevisiae (strain ATCC 204508 / S288c)</name>
    <name type="common">Baker's yeast</name>
    <dbReference type="NCBI Taxonomy" id="559292"/>
    <lineage>
        <taxon>Eukaryota</taxon>
        <taxon>Fungi</taxon>
        <taxon>Dikarya</taxon>
        <taxon>Ascomycota</taxon>
        <taxon>Saccharomycotina</taxon>
        <taxon>Saccharomycetes</taxon>
        <taxon>Saccharomycetales</taxon>
        <taxon>Saccharomycetaceae</taxon>
        <taxon>Saccharomyces</taxon>
    </lineage>
</organism>
<protein>
    <recommendedName>
        <fullName>Iron-sulfur assembly protein 2</fullName>
    </recommendedName>
</protein>
<evidence type="ECO:0000250" key="1">
    <source>
        <dbReference type="UniProtKB" id="P0AAC8"/>
    </source>
</evidence>
<evidence type="ECO:0000269" key="2">
    <source>
    </source>
</evidence>
<evidence type="ECO:0000269" key="3">
    <source>
    </source>
</evidence>
<evidence type="ECO:0000305" key="4"/>
<comment type="function">
    <text evidence="2">Involved in the assembly of mitochondrial and cytoplasmic iron-sulfur proteins. Probably involved in the binding of an intermediate of Fe/S cluster assembly.</text>
</comment>
<comment type="interaction">
    <interactant intactId="EBI-29438">
        <id>Q12425</id>
    </interactant>
    <interactant intactId="EBI-25654">
        <id>P47158</id>
        <label>IBA57</label>
    </interactant>
    <organismsDiffer>false</organismsDiffer>
    <experiments>2</experiments>
</comment>
<comment type="interaction">
    <interactant intactId="EBI-29438">
        <id>Q12425</id>
    </interactant>
    <interactant intactId="EBI-27136">
        <id>Q07821</id>
        <label>ISA1</label>
    </interactant>
    <organismsDiffer>false</organismsDiffer>
    <experiments>2</experiments>
</comment>
<comment type="subcellular location">
    <subcellularLocation>
        <location>Mitochondrion matrix</location>
    </subcellularLocation>
</comment>
<comment type="miscellaneous">
    <text evidence="3">Present with 1560 molecules/cell in log phase SD medium.</text>
</comment>
<comment type="similarity">
    <text evidence="4">Belongs to the HesB/IscA family.</text>
</comment>
<dbReference type="EMBL" id="Z71255">
    <property type="protein sequence ID" value="CAA94975.1"/>
    <property type="molecule type" value="Genomic_DNA"/>
</dbReference>
<dbReference type="EMBL" id="Z49219">
    <property type="protein sequence ID" value="CAA89184.1"/>
    <property type="molecule type" value="Genomic_DNA"/>
</dbReference>
<dbReference type="EMBL" id="BK006949">
    <property type="protein sequence ID" value="DAA11487.1"/>
    <property type="molecule type" value="Genomic_DNA"/>
</dbReference>
<dbReference type="PIR" id="S54088">
    <property type="entry name" value="S54088"/>
</dbReference>
<dbReference type="RefSeq" id="NP_015392.1">
    <property type="nucleotide sequence ID" value="NM_001184164.1"/>
</dbReference>
<dbReference type="SMR" id="Q12425"/>
<dbReference type="BioGRID" id="36239">
    <property type="interactions" value="32"/>
</dbReference>
<dbReference type="ComplexPortal" id="CPX-2723">
    <property type="entry name" value="ISA1-ISA2-IBA57 mitochondrial iron-sulfur protein assembly complex"/>
</dbReference>
<dbReference type="DIP" id="DIP-6434N"/>
<dbReference type="FunCoup" id="Q12425">
    <property type="interactions" value="365"/>
</dbReference>
<dbReference type="IntAct" id="Q12425">
    <property type="interactions" value="5"/>
</dbReference>
<dbReference type="MINT" id="Q12425"/>
<dbReference type="STRING" id="4932.YPR067W"/>
<dbReference type="PaxDb" id="4932-YPR067W"/>
<dbReference type="PeptideAtlas" id="Q12425"/>
<dbReference type="EnsemblFungi" id="YPR067W_mRNA">
    <property type="protein sequence ID" value="YPR067W"/>
    <property type="gene ID" value="YPR067W"/>
</dbReference>
<dbReference type="GeneID" id="856180"/>
<dbReference type="KEGG" id="sce:YPR067W"/>
<dbReference type="AGR" id="SGD:S000006271"/>
<dbReference type="SGD" id="S000006271">
    <property type="gene designation" value="ISA2"/>
</dbReference>
<dbReference type="VEuPathDB" id="FungiDB:YPR067W"/>
<dbReference type="eggNOG" id="KOG1119">
    <property type="taxonomic scope" value="Eukaryota"/>
</dbReference>
<dbReference type="GeneTree" id="ENSGT00390000005700"/>
<dbReference type="HOGENOM" id="CLU_069054_1_2_1"/>
<dbReference type="InParanoid" id="Q12425"/>
<dbReference type="OMA" id="CHGFQYT"/>
<dbReference type="OrthoDB" id="1938621at2759"/>
<dbReference type="BioCyc" id="YEAST:G3O-34215-MONOMER"/>
<dbReference type="Reactome" id="R-SCE-1362409">
    <property type="pathway name" value="Mitochondrial iron-sulfur cluster biogenesis"/>
</dbReference>
<dbReference type="BioGRID-ORCS" id="856180">
    <property type="hits" value="1 hit in 10 CRISPR screens"/>
</dbReference>
<dbReference type="PRO" id="PR:Q12425"/>
<dbReference type="Proteomes" id="UP000002311">
    <property type="component" value="Chromosome XVI"/>
</dbReference>
<dbReference type="RNAct" id="Q12425">
    <property type="molecule type" value="protein"/>
</dbReference>
<dbReference type="GO" id="GO:0005758">
    <property type="term" value="C:mitochondrial intermembrane space"/>
    <property type="evidence" value="ECO:0000314"/>
    <property type="project" value="SGD"/>
</dbReference>
<dbReference type="GO" id="GO:0005759">
    <property type="term" value="C:mitochondrial matrix"/>
    <property type="evidence" value="ECO:0000314"/>
    <property type="project" value="SGD"/>
</dbReference>
<dbReference type="GO" id="GO:0005739">
    <property type="term" value="C:mitochondrion"/>
    <property type="evidence" value="ECO:0007005"/>
    <property type="project" value="SGD"/>
</dbReference>
<dbReference type="GO" id="GO:0051537">
    <property type="term" value="F:2 iron, 2 sulfur cluster binding"/>
    <property type="evidence" value="ECO:0000318"/>
    <property type="project" value="GO_Central"/>
</dbReference>
<dbReference type="GO" id="GO:0051539">
    <property type="term" value="F:4 iron, 4 sulfur cluster binding"/>
    <property type="evidence" value="ECO:0000318"/>
    <property type="project" value="GO_Central"/>
</dbReference>
<dbReference type="GO" id="GO:0005506">
    <property type="term" value="F:iron ion binding"/>
    <property type="evidence" value="ECO:0000314"/>
    <property type="project" value="SGD"/>
</dbReference>
<dbReference type="GO" id="GO:0044572">
    <property type="term" value="P:[4Fe-4S] cluster assembly"/>
    <property type="evidence" value="ECO:0000315"/>
    <property type="project" value="SGD"/>
</dbReference>
<dbReference type="GO" id="GO:0009102">
    <property type="term" value="P:biotin biosynthetic process"/>
    <property type="evidence" value="ECO:0000315"/>
    <property type="project" value="SGD"/>
</dbReference>
<dbReference type="GO" id="GO:0016226">
    <property type="term" value="P:iron-sulfur cluster assembly"/>
    <property type="evidence" value="ECO:0000315"/>
    <property type="project" value="SGD"/>
</dbReference>
<dbReference type="FunFam" id="2.60.300.12:FF:000011">
    <property type="entry name" value="Iron-sulfur assembly protein 2"/>
    <property type="match status" value="1"/>
</dbReference>
<dbReference type="Gene3D" id="2.60.300.12">
    <property type="entry name" value="HesB-like domain"/>
    <property type="match status" value="1"/>
</dbReference>
<dbReference type="InterPro" id="IPR000361">
    <property type="entry name" value="FeS_biogenesis"/>
</dbReference>
<dbReference type="InterPro" id="IPR017870">
    <property type="entry name" value="FeS_cluster_insertion_CS"/>
</dbReference>
<dbReference type="InterPro" id="IPR035903">
    <property type="entry name" value="HesB-like_dom_sf"/>
</dbReference>
<dbReference type="PANTHER" id="PTHR43011">
    <property type="entry name" value="IRON-SULFUR CLUSTER ASSEMBLY 2 HOMOLOG, MITOCHONDRIAL"/>
    <property type="match status" value="1"/>
</dbReference>
<dbReference type="PANTHER" id="PTHR43011:SF1">
    <property type="entry name" value="IRON-SULFUR CLUSTER ASSEMBLY 2 HOMOLOG, MITOCHONDRIAL"/>
    <property type="match status" value="1"/>
</dbReference>
<dbReference type="Pfam" id="PF01521">
    <property type="entry name" value="Fe-S_biosyn"/>
    <property type="match status" value="1"/>
</dbReference>
<dbReference type="SUPFAM" id="SSF89360">
    <property type="entry name" value="HesB-like domain"/>
    <property type="match status" value="1"/>
</dbReference>
<dbReference type="PROSITE" id="PS01152">
    <property type="entry name" value="HESB"/>
    <property type="match status" value="1"/>
</dbReference>
<sequence length="185" mass="20877">MQAKLLFTRLNFRRPSTTLRQFPLTCFLFHSKAFYSDLVTKEPLITPKRIINKTPGLNLSISERASNRLAEIYRNSKENLRISVESGGCHGFQYNLTLEPATKPDIKNDVKDKEFSDDLDDDDSKDIIYVLPEDKGRVIIDSKSLNILNNTTLTYTNELIGSSFKIINGSLKSSCGCGSSFDIEN</sequence>
<reference key="1">
    <citation type="journal article" date="1997" name="Nature">
        <title>The nucleotide sequence of Saccharomyces cerevisiae chromosome XVI.</title>
        <authorList>
            <person name="Bussey H."/>
            <person name="Storms R.K."/>
            <person name="Ahmed A."/>
            <person name="Albermann K."/>
            <person name="Allen E."/>
            <person name="Ansorge W."/>
            <person name="Araujo R."/>
            <person name="Aparicio A."/>
            <person name="Barrell B.G."/>
            <person name="Badcock K."/>
            <person name="Benes V."/>
            <person name="Botstein D."/>
            <person name="Bowman S."/>
            <person name="Brueckner M."/>
            <person name="Carpenter J."/>
            <person name="Cherry J.M."/>
            <person name="Chung E."/>
            <person name="Churcher C.M."/>
            <person name="Coster F."/>
            <person name="Davis K."/>
            <person name="Davis R.W."/>
            <person name="Dietrich F.S."/>
            <person name="Delius H."/>
            <person name="DiPaolo T."/>
            <person name="Dubois E."/>
            <person name="Duesterhoeft A."/>
            <person name="Duncan M."/>
            <person name="Floeth M."/>
            <person name="Fortin N."/>
            <person name="Friesen J.D."/>
            <person name="Fritz C."/>
            <person name="Goffeau A."/>
            <person name="Hall J."/>
            <person name="Hebling U."/>
            <person name="Heumann K."/>
            <person name="Hilbert H."/>
            <person name="Hillier L.W."/>
            <person name="Hunicke-Smith S."/>
            <person name="Hyman R.W."/>
            <person name="Johnston M."/>
            <person name="Kalman S."/>
            <person name="Kleine K."/>
            <person name="Komp C."/>
            <person name="Kurdi O."/>
            <person name="Lashkari D."/>
            <person name="Lew H."/>
            <person name="Lin A."/>
            <person name="Lin D."/>
            <person name="Louis E.J."/>
            <person name="Marathe R."/>
            <person name="Messenguy F."/>
            <person name="Mewes H.-W."/>
            <person name="Mirtipati S."/>
            <person name="Moestl D."/>
            <person name="Mueller-Auer S."/>
            <person name="Namath A."/>
            <person name="Nentwich U."/>
            <person name="Oefner P."/>
            <person name="Pearson D."/>
            <person name="Petel F.X."/>
            <person name="Pohl T.M."/>
            <person name="Purnelle B."/>
            <person name="Rajandream M.A."/>
            <person name="Rechmann S."/>
            <person name="Rieger M."/>
            <person name="Riles L."/>
            <person name="Roberts D."/>
            <person name="Schaefer M."/>
            <person name="Scharfe M."/>
            <person name="Scherens B."/>
            <person name="Schramm S."/>
            <person name="Schroeder M."/>
            <person name="Sdicu A.-M."/>
            <person name="Tettelin H."/>
            <person name="Urrestarazu L.A."/>
            <person name="Ushinsky S."/>
            <person name="Vierendeels F."/>
            <person name="Vissers S."/>
            <person name="Voss H."/>
            <person name="Walsh S.V."/>
            <person name="Wambutt R."/>
            <person name="Wang Y."/>
            <person name="Wedler E."/>
            <person name="Wedler H."/>
            <person name="Winnett E."/>
            <person name="Zhong W.-W."/>
            <person name="Zollner A."/>
            <person name="Vo D.H."/>
            <person name="Hani J."/>
        </authorList>
    </citation>
    <scope>NUCLEOTIDE SEQUENCE [LARGE SCALE GENOMIC DNA]</scope>
    <source>
        <strain>ATCC 204508 / S288c</strain>
    </source>
</reference>
<reference key="2">
    <citation type="journal article" date="2014" name="G3 (Bethesda)">
        <title>The reference genome sequence of Saccharomyces cerevisiae: Then and now.</title>
        <authorList>
            <person name="Engel S.R."/>
            <person name="Dietrich F.S."/>
            <person name="Fisk D.G."/>
            <person name="Binkley G."/>
            <person name="Balakrishnan R."/>
            <person name="Costanzo M.C."/>
            <person name="Dwight S.S."/>
            <person name="Hitz B.C."/>
            <person name="Karra K."/>
            <person name="Nash R.S."/>
            <person name="Weng S."/>
            <person name="Wong E.D."/>
            <person name="Lloyd P."/>
            <person name="Skrzypek M.S."/>
            <person name="Miyasato S.R."/>
            <person name="Simison M."/>
            <person name="Cherry J.M."/>
        </authorList>
    </citation>
    <scope>GENOME REANNOTATION</scope>
    <source>
        <strain>ATCC 204508 / S288c</strain>
    </source>
</reference>
<reference key="3">
    <citation type="journal article" date="2000" name="FEBS Lett.">
        <title>Mitochondrial Isa2p plays a crucial role in the maturation of cellular iron-sulfur proteins.</title>
        <authorList>
            <person name="Pelzer W."/>
            <person name="Muhlenhoff U."/>
            <person name="Diekert K."/>
            <person name="Siegmund K."/>
            <person name="Kispal G."/>
            <person name="Lill R."/>
        </authorList>
    </citation>
    <scope>FUNCTION</scope>
</reference>
<reference key="4">
    <citation type="journal article" date="2003" name="Nature">
        <title>Global analysis of protein expression in yeast.</title>
        <authorList>
            <person name="Ghaemmaghami S."/>
            <person name="Huh W.-K."/>
            <person name="Bower K."/>
            <person name="Howson R.W."/>
            <person name="Belle A."/>
            <person name="Dephoure N."/>
            <person name="O'Shea E.K."/>
            <person name="Weissman J.S."/>
        </authorList>
    </citation>
    <scope>LEVEL OF PROTEIN EXPRESSION [LARGE SCALE ANALYSIS]</scope>
</reference>
<accession>Q12425</accession>
<accession>D6W471</accession>
<name>ISA2_YEAST</name>
<gene>
    <name type="primary">ISA2</name>
    <name type="ordered locus">YPR067W</name>
    <name type="ORF">YP9499.22</name>
</gene>
<proteinExistence type="evidence at protein level"/>
<keyword id="KW-0408">Iron</keyword>
<keyword id="KW-0479">Metal-binding</keyword>
<keyword id="KW-0496">Mitochondrion</keyword>
<keyword id="KW-1185">Reference proteome</keyword>